<comment type="function">
    <text evidence="1">Involved in unsaturated fatty acids biosynthesis. Catalyzes the dehydration of short chain beta-hydroxyacyl-ACPs and long chain saturated and unsaturated beta-hydroxyacyl-ACPs.</text>
</comment>
<comment type="catalytic activity">
    <reaction evidence="1">
        <text>a (3R)-hydroxyacyl-[ACP] = a (2E)-enoyl-[ACP] + H2O</text>
        <dbReference type="Rhea" id="RHEA:13097"/>
        <dbReference type="Rhea" id="RHEA-COMP:9925"/>
        <dbReference type="Rhea" id="RHEA-COMP:9945"/>
        <dbReference type="ChEBI" id="CHEBI:15377"/>
        <dbReference type="ChEBI" id="CHEBI:78784"/>
        <dbReference type="ChEBI" id="CHEBI:78827"/>
        <dbReference type="EC" id="4.2.1.59"/>
    </reaction>
</comment>
<comment type="subcellular location">
    <subcellularLocation>
        <location evidence="1">Cytoplasm</location>
    </subcellularLocation>
</comment>
<comment type="similarity">
    <text evidence="1">Belongs to the thioester dehydratase family. FabZ subfamily.</text>
</comment>
<name>FABZ_CLOBB</name>
<proteinExistence type="inferred from homology"/>
<keyword id="KW-0963">Cytoplasm</keyword>
<keyword id="KW-0441">Lipid A biosynthesis</keyword>
<keyword id="KW-0444">Lipid biosynthesis</keyword>
<keyword id="KW-0443">Lipid metabolism</keyword>
<keyword id="KW-0456">Lyase</keyword>
<reference key="1">
    <citation type="submission" date="2008-04" db="EMBL/GenBank/DDBJ databases">
        <title>Complete sequence of Clostridium botulinum strain Eklund.</title>
        <authorList>
            <person name="Brinkac L.M."/>
            <person name="Brown J.L."/>
            <person name="Bruce D."/>
            <person name="Detter C."/>
            <person name="Munk C."/>
            <person name="Smith L.A."/>
            <person name="Smith T.J."/>
            <person name="Sutton G."/>
            <person name="Brettin T.S."/>
        </authorList>
    </citation>
    <scope>NUCLEOTIDE SEQUENCE [LARGE SCALE GENOMIC DNA]</scope>
    <source>
        <strain>Eklund 17B / Type B</strain>
    </source>
</reference>
<feature type="chain" id="PRO_1000197289" description="3-hydroxyacyl-[acyl-carrier-protein] dehydratase FabZ">
    <location>
        <begin position="1"/>
        <end position="142"/>
    </location>
</feature>
<feature type="active site" evidence="1">
    <location>
        <position position="50"/>
    </location>
</feature>
<dbReference type="EC" id="4.2.1.59" evidence="1"/>
<dbReference type="EMBL" id="CP001056">
    <property type="protein sequence ID" value="ACD22048.1"/>
    <property type="molecule type" value="Genomic_DNA"/>
</dbReference>
<dbReference type="SMR" id="B2THK9"/>
<dbReference type="KEGG" id="cbk:CLL_A1153"/>
<dbReference type="PATRIC" id="fig|935198.13.peg.1099"/>
<dbReference type="HOGENOM" id="CLU_078912_3_0_9"/>
<dbReference type="Proteomes" id="UP000001195">
    <property type="component" value="Chromosome"/>
</dbReference>
<dbReference type="GO" id="GO:0005737">
    <property type="term" value="C:cytoplasm"/>
    <property type="evidence" value="ECO:0007669"/>
    <property type="project" value="UniProtKB-SubCell"/>
</dbReference>
<dbReference type="GO" id="GO:0016020">
    <property type="term" value="C:membrane"/>
    <property type="evidence" value="ECO:0007669"/>
    <property type="project" value="GOC"/>
</dbReference>
<dbReference type="GO" id="GO:0019171">
    <property type="term" value="F:(3R)-hydroxyacyl-[acyl-carrier-protein] dehydratase activity"/>
    <property type="evidence" value="ECO:0007669"/>
    <property type="project" value="UniProtKB-EC"/>
</dbReference>
<dbReference type="GO" id="GO:0006633">
    <property type="term" value="P:fatty acid biosynthetic process"/>
    <property type="evidence" value="ECO:0007669"/>
    <property type="project" value="UniProtKB-UniRule"/>
</dbReference>
<dbReference type="GO" id="GO:0009245">
    <property type="term" value="P:lipid A biosynthetic process"/>
    <property type="evidence" value="ECO:0007669"/>
    <property type="project" value="UniProtKB-UniRule"/>
</dbReference>
<dbReference type="CDD" id="cd01288">
    <property type="entry name" value="FabZ"/>
    <property type="match status" value="1"/>
</dbReference>
<dbReference type="FunFam" id="3.10.129.10:FF:000001">
    <property type="entry name" value="3-hydroxyacyl-[acyl-carrier-protein] dehydratase FabZ"/>
    <property type="match status" value="1"/>
</dbReference>
<dbReference type="Gene3D" id="3.10.129.10">
    <property type="entry name" value="Hotdog Thioesterase"/>
    <property type="match status" value="1"/>
</dbReference>
<dbReference type="HAMAP" id="MF_00406">
    <property type="entry name" value="FabZ"/>
    <property type="match status" value="1"/>
</dbReference>
<dbReference type="InterPro" id="IPR013114">
    <property type="entry name" value="FabA_FabZ"/>
</dbReference>
<dbReference type="InterPro" id="IPR010084">
    <property type="entry name" value="FabZ"/>
</dbReference>
<dbReference type="InterPro" id="IPR029069">
    <property type="entry name" value="HotDog_dom_sf"/>
</dbReference>
<dbReference type="NCBIfam" id="TIGR01750">
    <property type="entry name" value="fabZ"/>
    <property type="match status" value="1"/>
</dbReference>
<dbReference type="NCBIfam" id="NF000582">
    <property type="entry name" value="PRK00006.1"/>
    <property type="match status" value="1"/>
</dbReference>
<dbReference type="PANTHER" id="PTHR30272">
    <property type="entry name" value="3-HYDROXYACYL-[ACYL-CARRIER-PROTEIN] DEHYDRATASE"/>
    <property type="match status" value="1"/>
</dbReference>
<dbReference type="PANTHER" id="PTHR30272:SF1">
    <property type="entry name" value="3-HYDROXYACYL-[ACYL-CARRIER-PROTEIN] DEHYDRATASE"/>
    <property type="match status" value="1"/>
</dbReference>
<dbReference type="Pfam" id="PF07977">
    <property type="entry name" value="FabA"/>
    <property type="match status" value="1"/>
</dbReference>
<dbReference type="SUPFAM" id="SSF54637">
    <property type="entry name" value="Thioesterase/thiol ester dehydrase-isomerase"/>
    <property type="match status" value="1"/>
</dbReference>
<sequence>MLKIEEIKEILPHRYPFLLIDRVTEMDIEEKLFVKGYKNVSANEQFFQGHYPQEPIMPGVLQIEALAQAGAVAILSMEKFKGKTPLFAGTNKVRFKAKVVPGDRLDLYCEIVKLKGPIGIGKGIASVDGKTVCEAEILFAIG</sequence>
<accession>B2THK9</accession>
<gene>
    <name evidence="1" type="primary">fabZ</name>
    <name type="ordered locus">CLL_A1153</name>
</gene>
<protein>
    <recommendedName>
        <fullName evidence="1">3-hydroxyacyl-[acyl-carrier-protein] dehydratase FabZ</fullName>
        <ecNumber evidence="1">4.2.1.59</ecNumber>
    </recommendedName>
    <alternativeName>
        <fullName evidence="1">(3R)-hydroxymyristoyl-[acyl-carrier-protein] dehydratase</fullName>
        <shortName evidence="1">(3R)-hydroxymyristoyl-ACP dehydrase</shortName>
    </alternativeName>
    <alternativeName>
        <fullName evidence="1">Beta-hydroxyacyl-ACP dehydratase</fullName>
    </alternativeName>
</protein>
<organism>
    <name type="scientific">Clostridium botulinum (strain Eklund 17B / Type B)</name>
    <dbReference type="NCBI Taxonomy" id="935198"/>
    <lineage>
        <taxon>Bacteria</taxon>
        <taxon>Bacillati</taxon>
        <taxon>Bacillota</taxon>
        <taxon>Clostridia</taxon>
        <taxon>Eubacteriales</taxon>
        <taxon>Clostridiaceae</taxon>
        <taxon>Clostridium</taxon>
    </lineage>
</organism>
<evidence type="ECO:0000255" key="1">
    <source>
        <dbReference type="HAMAP-Rule" id="MF_00406"/>
    </source>
</evidence>